<reference key="1">
    <citation type="journal article" date="2005" name="Proc. Natl. Acad. Sci. U.S.A.">
        <title>Comparison of the complete genome sequences of Pseudomonas syringae pv. syringae B728a and pv. tomato DC3000.</title>
        <authorList>
            <person name="Feil H."/>
            <person name="Feil W.S."/>
            <person name="Chain P."/>
            <person name="Larimer F."/>
            <person name="Dibartolo G."/>
            <person name="Copeland A."/>
            <person name="Lykidis A."/>
            <person name="Trong S."/>
            <person name="Nolan M."/>
            <person name="Goltsman E."/>
            <person name="Thiel J."/>
            <person name="Malfatti S."/>
            <person name="Loper J.E."/>
            <person name="Lapidus A."/>
            <person name="Detter J.C."/>
            <person name="Land M."/>
            <person name="Richardson P.M."/>
            <person name="Kyrpides N.C."/>
            <person name="Ivanova N."/>
            <person name="Lindow S.E."/>
        </authorList>
    </citation>
    <scope>NUCLEOTIDE SEQUENCE [LARGE SCALE GENOMIC DNA]</scope>
    <source>
        <strain>B728a</strain>
    </source>
</reference>
<gene>
    <name evidence="1" type="primary">lipB</name>
    <name type="ordered locus">Psyr_4359</name>
</gene>
<comment type="function">
    <text evidence="1">Catalyzes the transfer of endogenously produced octanoic acid from octanoyl-acyl-carrier-protein onto the lipoyl domains of lipoate-dependent enzymes. Lipoyl-ACP can also act as a substrate although octanoyl-ACP is likely to be the physiological substrate.</text>
</comment>
<comment type="catalytic activity">
    <reaction evidence="1">
        <text>octanoyl-[ACP] + L-lysyl-[protein] = N(6)-octanoyl-L-lysyl-[protein] + holo-[ACP] + H(+)</text>
        <dbReference type="Rhea" id="RHEA:17665"/>
        <dbReference type="Rhea" id="RHEA-COMP:9636"/>
        <dbReference type="Rhea" id="RHEA-COMP:9685"/>
        <dbReference type="Rhea" id="RHEA-COMP:9752"/>
        <dbReference type="Rhea" id="RHEA-COMP:9928"/>
        <dbReference type="ChEBI" id="CHEBI:15378"/>
        <dbReference type="ChEBI" id="CHEBI:29969"/>
        <dbReference type="ChEBI" id="CHEBI:64479"/>
        <dbReference type="ChEBI" id="CHEBI:78463"/>
        <dbReference type="ChEBI" id="CHEBI:78809"/>
        <dbReference type="EC" id="2.3.1.181"/>
    </reaction>
</comment>
<comment type="pathway">
    <text evidence="1">Protein modification; protein lipoylation via endogenous pathway; protein N(6)-(lipoyl)lysine from octanoyl-[acyl-carrier-protein]: step 1/2.</text>
</comment>
<comment type="subcellular location">
    <subcellularLocation>
        <location evidence="1">Cytoplasm</location>
    </subcellularLocation>
</comment>
<comment type="miscellaneous">
    <text evidence="1">In the reaction, the free carboxyl group of octanoic acid is attached via an amide linkage to the epsilon-amino group of a specific lysine residue of lipoyl domains of lipoate-dependent enzymes.</text>
</comment>
<comment type="similarity">
    <text evidence="1">Belongs to the LipB family.</text>
</comment>
<sequence>MAATLGFRDLGLIDYETAWHAMKRFTDERGREAADEVWLVQHPPVFTQGQSGKAEHLLLPGNIPVVQVDRGGQVTYHGPGQLVAYLMLDVRRLGFGVRDLVTRIENTLIALLADYGVKAAAKADAPGVYVDGAKIASLGLRIRNGCSFHGLALNVDMDLEPFRRINPCGYAGLAMTQLSDQAGQIEFSEVSARLRAQLVKHLDYAEQATLTGGINHYD</sequence>
<keyword id="KW-0012">Acyltransferase</keyword>
<keyword id="KW-0963">Cytoplasm</keyword>
<keyword id="KW-0808">Transferase</keyword>
<name>LIPB_PSEU2</name>
<evidence type="ECO:0000255" key="1">
    <source>
        <dbReference type="HAMAP-Rule" id="MF_00013"/>
    </source>
</evidence>
<evidence type="ECO:0000255" key="2">
    <source>
        <dbReference type="PROSITE-ProRule" id="PRU01067"/>
    </source>
</evidence>
<dbReference type="EC" id="2.3.1.181" evidence="1"/>
<dbReference type="EMBL" id="CP000075">
    <property type="protein sequence ID" value="AAY39389.1"/>
    <property type="molecule type" value="Genomic_DNA"/>
</dbReference>
<dbReference type="RefSeq" id="WP_003313884.1">
    <property type="nucleotide sequence ID" value="NC_007005.1"/>
</dbReference>
<dbReference type="RefSeq" id="YP_237427.1">
    <property type="nucleotide sequence ID" value="NC_007005.1"/>
</dbReference>
<dbReference type="SMR" id="Q4ZN83"/>
<dbReference type="STRING" id="205918.Psyr_4359"/>
<dbReference type="GeneID" id="77280203"/>
<dbReference type="KEGG" id="psb:Psyr_4359"/>
<dbReference type="PATRIC" id="fig|205918.7.peg.4499"/>
<dbReference type="eggNOG" id="COG0321">
    <property type="taxonomic scope" value="Bacteria"/>
</dbReference>
<dbReference type="HOGENOM" id="CLU_035168_3_1_6"/>
<dbReference type="OrthoDB" id="9787061at2"/>
<dbReference type="UniPathway" id="UPA00538">
    <property type="reaction ID" value="UER00592"/>
</dbReference>
<dbReference type="Proteomes" id="UP000000426">
    <property type="component" value="Chromosome"/>
</dbReference>
<dbReference type="GO" id="GO:0005737">
    <property type="term" value="C:cytoplasm"/>
    <property type="evidence" value="ECO:0007669"/>
    <property type="project" value="UniProtKB-SubCell"/>
</dbReference>
<dbReference type="GO" id="GO:0033819">
    <property type="term" value="F:lipoyl(octanoyl) transferase activity"/>
    <property type="evidence" value="ECO:0007669"/>
    <property type="project" value="UniProtKB-EC"/>
</dbReference>
<dbReference type="GO" id="GO:0036211">
    <property type="term" value="P:protein modification process"/>
    <property type="evidence" value="ECO:0007669"/>
    <property type="project" value="InterPro"/>
</dbReference>
<dbReference type="CDD" id="cd16444">
    <property type="entry name" value="LipB"/>
    <property type="match status" value="1"/>
</dbReference>
<dbReference type="FunFam" id="3.30.930.10:FF:000020">
    <property type="entry name" value="Octanoyltransferase"/>
    <property type="match status" value="1"/>
</dbReference>
<dbReference type="Gene3D" id="3.30.930.10">
    <property type="entry name" value="Bira Bifunctional Protein, Domain 2"/>
    <property type="match status" value="1"/>
</dbReference>
<dbReference type="HAMAP" id="MF_00013">
    <property type="entry name" value="LipB"/>
    <property type="match status" value="1"/>
</dbReference>
<dbReference type="InterPro" id="IPR045864">
    <property type="entry name" value="aa-tRNA-synth_II/BPL/LPL"/>
</dbReference>
<dbReference type="InterPro" id="IPR004143">
    <property type="entry name" value="BPL_LPL_catalytic"/>
</dbReference>
<dbReference type="InterPro" id="IPR000544">
    <property type="entry name" value="Octanoyltransferase"/>
</dbReference>
<dbReference type="InterPro" id="IPR020605">
    <property type="entry name" value="Octanoyltransferase_CS"/>
</dbReference>
<dbReference type="NCBIfam" id="TIGR00214">
    <property type="entry name" value="lipB"/>
    <property type="match status" value="1"/>
</dbReference>
<dbReference type="NCBIfam" id="NF010922">
    <property type="entry name" value="PRK14342.1"/>
    <property type="match status" value="1"/>
</dbReference>
<dbReference type="NCBIfam" id="NF010925">
    <property type="entry name" value="PRK14345.1"/>
    <property type="match status" value="1"/>
</dbReference>
<dbReference type="PANTHER" id="PTHR10993:SF7">
    <property type="entry name" value="LIPOYLTRANSFERASE 2, MITOCHONDRIAL-RELATED"/>
    <property type="match status" value="1"/>
</dbReference>
<dbReference type="PANTHER" id="PTHR10993">
    <property type="entry name" value="OCTANOYLTRANSFERASE"/>
    <property type="match status" value="1"/>
</dbReference>
<dbReference type="Pfam" id="PF21948">
    <property type="entry name" value="LplA-B_cat"/>
    <property type="match status" value="1"/>
</dbReference>
<dbReference type="PIRSF" id="PIRSF016262">
    <property type="entry name" value="LPLase"/>
    <property type="match status" value="1"/>
</dbReference>
<dbReference type="SUPFAM" id="SSF55681">
    <property type="entry name" value="Class II aaRS and biotin synthetases"/>
    <property type="match status" value="1"/>
</dbReference>
<dbReference type="PROSITE" id="PS51733">
    <property type="entry name" value="BPL_LPL_CATALYTIC"/>
    <property type="match status" value="1"/>
</dbReference>
<dbReference type="PROSITE" id="PS01313">
    <property type="entry name" value="LIPB"/>
    <property type="match status" value="1"/>
</dbReference>
<protein>
    <recommendedName>
        <fullName evidence="1">Octanoyltransferase</fullName>
        <ecNumber evidence="1">2.3.1.181</ecNumber>
    </recommendedName>
    <alternativeName>
        <fullName evidence="1">Lipoate-protein ligase B</fullName>
    </alternativeName>
    <alternativeName>
        <fullName evidence="1">Lipoyl/octanoyl transferase</fullName>
    </alternativeName>
    <alternativeName>
        <fullName evidence="1">Octanoyl-[acyl-carrier-protein]-protein N-octanoyltransferase</fullName>
    </alternativeName>
</protein>
<organism>
    <name type="scientific">Pseudomonas syringae pv. syringae (strain B728a)</name>
    <dbReference type="NCBI Taxonomy" id="205918"/>
    <lineage>
        <taxon>Bacteria</taxon>
        <taxon>Pseudomonadati</taxon>
        <taxon>Pseudomonadota</taxon>
        <taxon>Gammaproteobacteria</taxon>
        <taxon>Pseudomonadales</taxon>
        <taxon>Pseudomonadaceae</taxon>
        <taxon>Pseudomonas</taxon>
        <taxon>Pseudomonas syringae</taxon>
    </lineage>
</organism>
<proteinExistence type="inferred from homology"/>
<feature type="chain" id="PRO_0000242749" description="Octanoyltransferase">
    <location>
        <begin position="1"/>
        <end position="218"/>
    </location>
</feature>
<feature type="domain" description="BPL/LPL catalytic" evidence="2">
    <location>
        <begin position="31"/>
        <end position="206"/>
    </location>
</feature>
<feature type="active site" description="Acyl-thioester intermediate" evidence="1">
    <location>
        <position position="168"/>
    </location>
</feature>
<feature type="binding site" evidence="1">
    <location>
        <begin position="70"/>
        <end position="77"/>
    </location>
    <ligand>
        <name>substrate</name>
    </ligand>
</feature>
<feature type="binding site" evidence="1">
    <location>
        <begin position="137"/>
        <end position="139"/>
    </location>
    <ligand>
        <name>substrate</name>
    </ligand>
</feature>
<feature type="binding site" evidence="1">
    <location>
        <begin position="150"/>
        <end position="152"/>
    </location>
    <ligand>
        <name>substrate</name>
    </ligand>
</feature>
<feature type="site" description="Lowers pKa of active site Cys" evidence="1">
    <location>
        <position position="134"/>
    </location>
</feature>
<accession>Q4ZN83</accession>